<comment type="function">
    <text evidence="1">Channel that opens in response to stretch forces in the membrane lipid bilayer. May participate in the regulation of osmotic pressure changes within the cell.</text>
</comment>
<comment type="subunit">
    <text evidence="1">Homopentamer.</text>
</comment>
<comment type="subcellular location">
    <subcellularLocation>
        <location evidence="1">Cell inner membrane</location>
        <topology evidence="1">Multi-pass membrane protein</topology>
    </subcellularLocation>
</comment>
<comment type="similarity">
    <text evidence="1">Belongs to the MscL family.</text>
</comment>
<name>MSCL_PROMH</name>
<evidence type="ECO:0000255" key="1">
    <source>
        <dbReference type="HAMAP-Rule" id="MF_00115"/>
    </source>
</evidence>
<sequence>MAFFKEFREFAMKGNVVDMAVGVIIGAAFGKIVSSLVADVIMPPLGLLIGGIDFKQFSLVLREAHGDIPAVILNYGAFIQTVFDFAIVAFAIFCAIKLINKMRRQEEEQPKAPPAPSAEETLLTEIRDLLKNQQK</sequence>
<proteinExistence type="inferred from homology"/>
<organism>
    <name type="scientific">Proteus mirabilis (strain HI4320)</name>
    <dbReference type="NCBI Taxonomy" id="529507"/>
    <lineage>
        <taxon>Bacteria</taxon>
        <taxon>Pseudomonadati</taxon>
        <taxon>Pseudomonadota</taxon>
        <taxon>Gammaproteobacteria</taxon>
        <taxon>Enterobacterales</taxon>
        <taxon>Morganellaceae</taxon>
        <taxon>Proteus</taxon>
    </lineage>
</organism>
<keyword id="KW-0997">Cell inner membrane</keyword>
<keyword id="KW-1003">Cell membrane</keyword>
<keyword id="KW-0407">Ion channel</keyword>
<keyword id="KW-0406">Ion transport</keyword>
<keyword id="KW-0472">Membrane</keyword>
<keyword id="KW-1185">Reference proteome</keyword>
<keyword id="KW-0812">Transmembrane</keyword>
<keyword id="KW-1133">Transmembrane helix</keyword>
<keyword id="KW-0813">Transport</keyword>
<dbReference type="EMBL" id="AM942759">
    <property type="protein sequence ID" value="CAR46437.1"/>
    <property type="molecule type" value="Genomic_DNA"/>
</dbReference>
<dbReference type="RefSeq" id="WP_004246937.1">
    <property type="nucleotide sequence ID" value="NC_010554.1"/>
</dbReference>
<dbReference type="SMR" id="B4F1L3"/>
<dbReference type="EnsemblBacteria" id="CAR46437">
    <property type="protein sequence ID" value="CAR46437"/>
    <property type="gene ID" value="PMI3284"/>
</dbReference>
<dbReference type="GeneID" id="6802662"/>
<dbReference type="KEGG" id="pmr:PMI3284"/>
<dbReference type="eggNOG" id="COG1970">
    <property type="taxonomic scope" value="Bacteria"/>
</dbReference>
<dbReference type="HOGENOM" id="CLU_095787_0_0_6"/>
<dbReference type="Proteomes" id="UP000008319">
    <property type="component" value="Chromosome"/>
</dbReference>
<dbReference type="GO" id="GO:0005886">
    <property type="term" value="C:plasma membrane"/>
    <property type="evidence" value="ECO:0007669"/>
    <property type="project" value="UniProtKB-SubCell"/>
</dbReference>
<dbReference type="GO" id="GO:0008381">
    <property type="term" value="F:mechanosensitive monoatomic ion channel activity"/>
    <property type="evidence" value="ECO:0007669"/>
    <property type="project" value="UniProtKB-UniRule"/>
</dbReference>
<dbReference type="FunFam" id="1.10.1200.120:FF:000001">
    <property type="entry name" value="Large-conductance mechanosensitive channel"/>
    <property type="match status" value="1"/>
</dbReference>
<dbReference type="Gene3D" id="1.10.1200.120">
    <property type="entry name" value="Large-conductance mechanosensitive channel, MscL, domain 1"/>
    <property type="match status" value="1"/>
</dbReference>
<dbReference type="HAMAP" id="MF_00115">
    <property type="entry name" value="MscL"/>
    <property type="match status" value="1"/>
</dbReference>
<dbReference type="InterPro" id="IPR019823">
    <property type="entry name" value="Mechanosensitive_channel_CS"/>
</dbReference>
<dbReference type="InterPro" id="IPR001185">
    <property type="entry name" value="MS_channel"/>
</dbReference>
<dbReference type="InterPro" id="IPR037673">
    <property type="entry name" value="MSC/AndL"/>
</dbReference>
<dbReference type="InterPro" id="IPR036019">
    <property type="entry name" value="MscL_channel"/>
</dbReference>
<dbReference type="NCBIfam" id="TIGR00220">
    <property type="entry name" value="mscL"/>
    <property type="match status" value="1"/>
</dbReference>
<dbReference type="NCBIfam" id="NF001841">
    <property type="entry name" value="PRK00567.1-1"/>
    <property type="match status" value="1"/>
</dbReference>
<dbReference type="NCBIfam" id="NF001843">
    <property type="entry name" value="PRK00567.1-4"/>
    <property type="match status" value="1"/>
</dbReference>
<dbReference type="PANTHER" id="PTHR30266:SF2">
    <property type="entry name" value="LARGE-CONDUCTANCE MECHANOSENSITIVE CHANNEL"/>
    <property type="match status" value="1"/>
</dbReference>
<dbReference type="PANTHER" id="PTHR30266">
    <property type="entry name" value="MECHANOSENSITIVE CHANNEL MSCL"/>
    <property type="match status" value="1"/>
</dbReference>
<dbReference type="Pfam" id="PF01741">
    <property type="entry name" value="MscL"/>
    <property type="match status" value="1"/>
</dbReference>
<dbReference type="PRINTS" id="PR01264">
    <property type="entry name" value="MECHCHANNEL"/>
</dbReference>
<dbReference type="SUPFAM" id="SSF81330">
    <property type="entry name" value="Gated mechanosensitive channel"/>
    <property type="match status" value="1"/>
</dbReference>
<dbReference type="PROSITE" id="PS01327">
    <property type="entry name" value="MSCL"/>
    <property type="match status" value="1"/>
</dbReference>
<feature type="chain" id="PRO_1000094914" description="Large-conductance mechanosensitive channel">
    <location>
        <begin position="1"/>
        <end position="135"/>
    </location>
</feature>
<feature type="transmembrane region" description="Helical" evidence="1">
    <location>
        <begin position="10"/>
        <end position="30"/>
    </location>
</feature>
<feature type="transmembrane region" description="Helical" evidence="1">
    <location>
        <begin position="76"/>
        <end position="96"/>
    </location>
</feature>
<gene>
    <name evidence="1" type="primary">mscL</name>
    <name type="ordered locus">PMI3284</name>
</gene>
<protein>
    <recommendedName>
        <fullName evidence="1">Large-conductance mechanosensitive channel</fullName>
    </recommendedName>
</protein>
<reference key="1">
    <citation type="journal article" date="2008" name="J. Bacteriol.">
        <title>Complete genome sequence of uropathogenic Proteus mirabilis, a master of both adherence and motility.</title>
        <authorList>
            <person name="Pearson M.M."/>
            <person name="Sebaihia M."/>
            <person name="Churcher C."/>
            <person name="Quail M.A."/>
            <person name="Seshasayee A.S."/>
            <person name="Luscombe N.M."/>
            <person name="Abdellah Z."/>
            <person name="Arrosmith C."/>
            <person name="Atkin B."/>
            <person name="Chillingworth T."/>
            <person name="Hauser H."/>
            <person name="Jagels K."/>
            <person name="Moule S."/>
            <person name="Mungall K."/>
            <person name="Norbertczak H."/>
            <person name="Rabbinowitsch E."/>
            <person name="Walker D."/>
            <person name="Whithead S."/>
            <person name="Thomson N.R."/>
            <person name="Rather P.N."/>
            <person name="Parkhill J."/>
            <person name="Mobley H.L.T."/>
        </authorList>
    </citation>
    <scope>NUCLEOTIDE SEQUENCE [LARGE SCALE GENOMIC DNA]</scope>
    <source>
        <strain>HI4320</strain>
    </source>
</reference>
<accession>B4F1L3</accession>